<name>CYF_GNEPA</name>
<protein>
    <recommendedName>
        <fullName evidence="2">Cytochrome f</fullName>
    </recommendedName>
</protein>
<keyword id="KW-0150">Chloroplast</keyword>
<keyword id="KW-0249">Electron transport</keyword>
<keyword id="KW-0349">Heme</keyword>
<keyword id="KW-0408">Iron</keyword>
<keyword id="KW-0472">Membrane</keyword>
<keyword id="KW-0479">Metal-binding</keyword>
<keyword id="KW-0602">Photosynthesis</keyword>
<keyword id="KW-0934">Plastid</keyword>
<keyword id="KW-0732">Signal</keyword>
<keyword id="KW-0793">Thylakoid</keyword>
<keyword id="KW-0812">Transmembrane</keyword>
<keyword id="KW-1133">Transmembrane helix</keyword>
<keyword id="KW-0813">Transport</keyword>
<accession>A6BM17</accession>
<accession>B7ZIA1</accession>
<dbReference type="EMBL" id="AB295913">
    <property type="protein sequence ID" value="BAF64862.1"/>
    <property type="molecule type" value="Genomic_DNA"/>
</dbReference>
<dbReference type="EMBL" id="AP009569">
    <property type="protein sequence ID" value="BAH11281.1"/>
    <property type="molecule type" value="Genomic_DNA"/>
</dbReference>
<dbReference type="RefSeq" id="YP_002519770.1">
    <property type="nucleotide sequence ID" value="NC_011942.1"/>
</dbReference>
<dbReference type="SMR" id="A6BM17"/>
<dbReference type="GeneID" id="7368164"/>
<dbReference type="GO" id="GO:0009535">
    <property type="term" value="C:chloroplast thylakoid membrane"/>
    <property type="evidence" value="ECO:0007669"/>
    <property type="project" value="UniProtKB-SubCell"/>
</dbReference>
<dbReference type="GO" id="GO:0009055">
    <property type="term" value="F:electron transfer activity"/>
    <property type="evidence" value="ECO:0007669"/>
    <property type="project" value="UniProtKB-UniRule"/>
</dbReference>
<dbReference type="GO" id="GO:0020037">
    <property type="term" value="F:heme binding"/>
    <property type="evidence" value="ECO:0007669"/>
    <property type="project" value="InterPro"/>
</dbReference>
<dbReference type="GO" id="GO:0005506">
    <property type="term" value="F:iron ion binding"/>
    <property type="evidence" value="ECO:0007669"/>
    <property type="project" value="InterPro"/>
</dbReference>
<dbReference type="GO" id="GO:0015979">
    <property type="term" value="P:photosynthesis"/>
    <property type="evidence" value="ECO:0007669"/>
    <property type="project" value="UniProtKB-UniRule"/>
</dbReference>
<dbReference type="FunFam" id="1.20.5.700:FF:000001">
    <property type="entry name" value="Cytochrome f"/>
    <property type="match status" value="1"/>
</dbReference>
<dbReference type="FunFam" id="2.40.50.100:FF:000007">
    <property type="entry name" value="Cytochrome f"/>
    <property type="match status" value="1"/>
</dbReference>
<dbReference type="FunFam" id="2.60.40.830:FF:000001">
    <property type="entry name" value="Cytochrome f"/>
    <property type="match status" value="1"/>
</dbReference>
<dbReference type="Gene3D" id="2.40.50.100">
    <property type="match status" value="1"/>
</dbReference>
<dbReference type="Gene3D" id="2.60.40.830">
    <property type="entry name" value="Cytochrome f large domain"/>
    <property type="match status" value="1"/>
</dbReference>
<dbReference type="Gene3D" id="1.20.5.700">
    <property type="entry name" value="Single helix bin"/>
    <property type="match status" value="1"/>
</dbReference>
<dbReference type="HAMAP" id="MF_00610">
    <property type="entry name" value="Cytb6_f_cytF"/>
    <property type="match status" value="1"/>
</dbReference>
<dbReference type="InterPro" id="IPR024058">
    <property type="entry name" value="Cyt-f_TM"/>
</dbReference>
<dbReference type="InterPro" id="IPR002325">
    <property type="entry name" value="Cyt_f"/>
</dbReference>
<dbReference type="InterPro" id="IPR024094">
    <property type="entry name" value="Cyt_f_lg_dom"/>
</dbReference>
<dbReference type="InterPro" id="IPR036826">
    <property type="entry name" value="Cyt_f_lg_dom_sf"/>
</dbReference>
<dbReference type="InterPro" id="IPR011054">
    <property type="entry name" value="Rudment_hybrid_motif"/>
</dbReference>
<dbReference type="PANTHER" id="PTHR33288">
    <property type="match status" value="1"/>
</dbReference>
<dbReference type="PANTHER" id="PTHR33288:SF10">
    <property type="entry name" value="CYTOCHROME F"/>
    <property type="match status" value="1"/>
</dbReference>
<dbReference type="Pfam" id="PF01333">
    <property type="entry name" value="Apocytochr_F_C"/>
    <property type="match status" value="1"/>
</dbReference>
<dbReference type="Pfam" id="PF16639">
    <property type="entry name" value="Apocytochr_F_N"/>
    <property type="match status" value="1"/>
</dbReference>
<dbReference type="PRINTS" id="PR00610">
    <property type="entry name" value="CYTOCHROMEF"/>
</dbReference>
<dbReference type="SUPFAM" id="SSF103431">
    <property type="entry name" value="Cytochrome f subunit of the cytochrome b6f complex, transmembrane anchor"/>
    <property type="match status" value="1"/>
</dbReference>
<dbReference type="SUPFAM" id="SSF49441">
    <property type="entry name" value="Cytochrome f, large domain"/>
    <property type="match status" value="1"/>
</dbReference>
<dbReference type="SUPFAM" id="SSF51246">
    <property type="entry name" value="Rudiment single hybrid motif"/>
    <property type="match status" value="1"/>
</dbReference>
<dbReference type="PROSITE" id="PS51010">
    <property type="entry name" value="CYTF"/>
    <property type="match status" value="1"/>
</dbReference>
<proteinExistence type="inferred from homology"/>
<geneLocation type="chloroplast"/>
<feature type="signal peptide" evidence="2">
    <location>
        <begin position="1"/>
        <end position="32"/>
    </location>
</feature>
<feature type="chain" id="PRO_0000342063" description="Cytochrome f">
    <location>
        <begin position="33"/>
        <end position="320"/>
    </location>
</feature>
<feature type="transmembrane region" description="Helical" evidence="2">
    <location>
        <begin position="286"/>
        <end position="306"/>
    </location>
</feature>
<feature type="binding site" description="axial binding residue" evidence="2">
    <location>
        <position position="36"/>
    </location>
    <ligand>
        <name>heme</name>
        <dbReference type="ChEBI" id="CHEBI:30413"/>
    </ligand>
    <ligandPart>
        <name>Fe</name>
        <dbReference type="ChEBI" id="CHEBI:18248"/>
    </ligandPart>
</feature>
<feature type="binding site" description="covalent" evidence="2">
    <location>
        <position position="56"/>
    </location>
    <ligand>
        <name>heme</name>
        <dbReference type="ChEBI" id="CHEBI:30413"/>
    </ligand>
</feature>
<feature type="binding site" description="covalent" evidence="2">
    <location>
        <position position="59"/>
    </location>
    <ligand>
        <name>heme</name>
        <dbReference type="ChEBI" id="CHEBI:30413"/>
    </ligand>
</feature>
<feature type="binding site" description="axial binding residue" evidence="2">
    <location>
        <position position="60"/>
    </location>
    <ligand>
        <name>heme</name>
        <dbReference type="ChEBI" id="CHEBI:30413"/>
    </ligand>
    <ligandPart>
        <name>Fe</name>
        <dbReference type="ChEBI" id="CHEBI:18248"/>
    </ligandPart>
</feature>
<gene>
    <name evidence="2" type="primary">petA</name>
</gene>
<evidence type="ECO:0000250" key="1"/>
<evidence type="ECO:0000255" key="2">
    <source>
        <dbReference type="HAMAP-Rule" id="MF_00610"/>
    </source>
</evidence>
<comment type="function">
    <text evidence="2">Component of the cytochrome b6-f complex, which mediates electron transfer between photosystem II (PSII) and photosystem I (PSI), cyclic electron flow around PSI, and state transitions.</text>
</comment>
<comment type="cofactor">
    <cofactor evidence="2">
        <name>heme</name>
        <dbReference type="ChEBI" id="CHEBI:30413"/>
    </cofactor>
    <text evidence="2">Binds 1 heme group covalently.</text>
</comment>
<comment type="subunit">
    <text evidence="1">The 4 large subunits of the cytochrome b6-f complex are cytochrome b6, subunit IV (17 kDa polypeptide, petD), cytochrome f and the Rieske protein, while the 4 small subunits are PetG, PetL, PetM and PetN. The complex functions as a dimer (By similarity).</text>
</comment>
<comment type="subcellular location">
    <subcellularLocation>
        <location evidence="2">Plastid</location>
        <location evidence="2">Chloroplast thylakoid membrane</location>
        <topology evidence="2">Single-pass membrane protein</topology>
    </subcellularLocation>
</comment>
<comment type="similarity">
    <text evidence="2">Belongs to the cytochrome f family.</text>
</comment>
<sequence length="320" mass="35253">MKTKKSYDKVTRWVTPPILMLIIIHIITGACSSNAYPIFAQKSYENPREATGRIVCANCHLAKKSVEVEVPQSVLPNSVFEAVVKIPYDTQIKQVLANGKKGGLNVGAVLILPEGFELAPPERISPEIKEKMGTLNFQNYSPSKKNIIVIGPIPGQKYQEILFPILSPDPANKKEIHFQKYPIYVGGNRGRGQIYPNGSKSNNTVYNASVTGRISQILRKEKGGYEVTIENISQGRSVIDIIPPGPELLVSEGEFVKADQPLTNNPNVGGFGQINAEIVLQDPSRIQGLLGFLASVVLAQIFLVLKKKQFEKVQLAEMEF</sequence>
<reference key="1">
    <citation type="journal article" date="2007" name="Mol. Biol. Evol.">
        <title>Chloroplast genome (cpDNA) of Cycas taitungensis and 56 cp protein-coding genes of Gnetum parvifolium: insights into cpDNA evolution and phylogeny of extant seed plants.</title>
        <authorList>
            <person name="Wu C.-S."/>
            <person name="Wang Y.-N."/>
            <person name="Liu S.-M."/>
            <person name="Chaw S.-M."/>
        </authorList>
    </citation>
    <scope>NUCLEOTIDE SEQUENCE [LARGE SCALE GENOMIC DNA]</scope>
</reference>
<reference key="2">
    <citation type="journal article" date="2009" name="Mol. Phylogenet. Evol.">
        <title>Evolution of reduced and compact chloroplast genomes (cpDNAs) in gnetophytes: Selection toward a lower-cost strategy.</title>
        <authorList>
            <person name="Wu C.-S."/>
            <person name="Lai Y.-T."/>
            <person name="Lin C.-P."/>
            <person name="Wang Y.-N."/>
            <person name="Chaw S.-M."/>
        </authorList>
    </citation>
    <scope>NUCLEOTIDE SEQUENCE [LARGE SCALE GENOMIC DNA]</scope>
</reference>
<organism>
    <name type="scientific">Gnetum parvifolium</name>
    <name type="common">Small-leaved jointfir</name>
    <name type="synonym">Gnetum scandens var. parvifolium</name>
    <dbReference type="NCBI Taxonomy" id="33153"/>
    <lineage>
        <taxon>Eukaryota</taxon>
        <taxon>Viridiplantae</taxon>
        <taxon>Streptophyta</taxon>
        <taxon>Embryophyta</taxon>
        <taxon>Tracheophyta</taxon>
        <taxon>Spermatophyta</taxon>
        <taxon>Gnetopsida</taxon>
        <taxon>Gnetidae</taxon>
        <taxon>Gnetales</taxon>
        <taxon>Gnetaceae</taxon>
        <taxon>Gnetum</taxon>
    </lineage>
</organism>